<feature type="chain" id="PRO_0000181331" description="Somatotropin">
    <location>
        <begin position="1"/>
        <end position="190"/>
    </location>
</feature>
<feature type="binding site" evidence="1">
    <location>
        <position position="19"/>
    </location>
    <ligand>
        <name>Zn(2+)</name>
        <dbReference type="ChEBI" id="CHEBI:29105"/>
    </ligand>
</feature>
<feature type="binding site" evidence="1">
    <location>
        <position position="172"/>
    </location>
    <ligand>
        <name>Zn(2+)</name>
        <dbReference type="ChEBI" id="CHEBI:29105"/>
    </ligand>
</feature>
<feature type="modified residue" description="Phosphoserine" evidence="2">
    <location>
        <position position="105"/>
    </location>
</feature>
<feature type="disulfide bond" evidence="1">
    <location>
        <begin position="52"/>
        <end position="163"/>
    </location>
</feature>
<feature type="disulfide bond" evidence="1">
    <location>
        <begin position="180"/>
        <end position="188"/>
    </location>
</feature>
<comment type="function">
    <text>Plays an important role in growth control. Its major role in stimulating body growth is to stimulate the liver and other tissues to secrete IGF1. It stimulates both the differentiation and proliferation of myoblasts. It also stimulates amino acid uptake and protein synthesis in muscle and other tissues.</text>
</comment>
<comment type="subcellular location">
    <subcellularLocation>
        <location>Secreted</location>
    </subcellularLocation>
</comment>
<comment type="similarity">
    <text evidence="3">Belongs to the somatotropin/prolactin family.</text>
</comment>
<sequence>FPAMPLSSLFANAVLRAQHLHQLAADTYKEFERAYIPEGQRYSIQNAQAAFCFSETIPAPTGKDEAQQRSDVELLRFSLVLIQSWLGPLQFLSRVFTNSLVFGTSDRVYEKLKDLEEGIQALMRELEDGSPRAGQILKQTYDKFDTNLRSDDALLKNYGLLSCFKKDLHKAETYLRVMKCRRFVESSCAF</sequence>
<organism>
    <name type="scientific">Vulpes vulpes</name>
    <name type="common">Red fox</name>
    <dbReference type="NCBI Taxonomy" id="9627"/>
    <lineage>
        <taxon>Eukaryota</taxon>
        <taxon>Metazoa</taxon>
        <taxon>Chordata</taxon>
        <taxon>Craniata</taxon>
        <taxon>Vertebrata</taxon>
        <taxon>Euteleostomi</taxon>
        <taxon>Mammalia</taxon>
        <taxon>Eutheria</taxon>
        <taxon>Laurasiatheria</taxon>
        <taxon>Carnivora</taxon>
        <taxon>Caniformia</taxon>
        <taxon>Canidae</taxon>
        <taxon>Vulpes</taxon>
    </lineage>
</organism>
<name>SOMA_VULVU</name>
<dbReference type="SMR" id="P10766"/>
<dbReference type="STRING" id="9627.ENSVVUP00000008127"/>
<dbReference type="Proteomes" id="UP000286640">
    <property type="component" value="Unplaced"/>
</dbReference>
<dbReference type="GO" id="GO:0005615">
    <property type="term" value="C:extracellular space"/>
    <property type="evidence" value="ECO:0007669"/>
    <property type="project" value="InterPro"/>
</dbReference>
<dbReference type="GO" id="GO:0008083">
    <property type="term" value="F:growth factor activity"/>
    <property type="evidence" value="ECO:0007669"/>
    <property type="project" value="TreeGrafter"/>
</dbReference>
<dbReference type="GO" id="GO:0005131">
    <property type="term" value="F:growth hormone receptor binding"/>
    <property type="evidence" value="ECO:0007669"/>
    <property type="project" value="InterPro"/>
</dbReference>
<dbReference type="GO" id="GO:0005179">
    <property type="term" value="F:hormone activity"/>
    <property type="evidence" value="ECO:0007669"/>
    <property type="project" value="UniProtKB-KW"/>
</dbReference>
<dbReference type="GO" id="GO:0046872">
    <property type="term" value="F:metal ion binding"/>
    <property type="evidence" value="ECO:0007669"/>
    <property type="project" value="UniProtKB-KW"/>
</dbReference>
<dbReference type="GO" id="GO:0048513">
    <property type="term" value="P:animal organ development"/>
    <property type="evidence" value="ECO:0007669"/>
    <property type="project" value="TreeGrafter"/>
</dbReference>
<dbReference type="GO" id="GO:0060396">
    <property type="term" value="P:growth hormone receptor signaling pathway"/>
    <property type="evidence" value="ECO:0007669"/>
    <property type="project" value="TreeGrafter"/>
</dbReference>
<dbReference type="GO" id="GO:0045927">
    <property type="term" value="P:positive regulation of growth"/>
    <property type="evidence" value="ECO:0007669"/>
    <property type="project" value="TreeGrafter"/>
</dbReference>
<dbReference type="GO" id="GO:0046427">
    <property type="term" value="P:positive regulation of receptor signaling pathway via JAK-STAT"/>
    <property type="evidence" value="ECO:0007669"/>
    <property type="project" value="TreeGrafter"/>
</dbReference>
<dbReference type="GO" id="GO:0031667">
    <property type="term" value="P:response to nutrient levels"/>
    <property type="evidence" value="ECO:0007669"/>
    <property type="project" value="TreeGrafter"/>
</dbReference>
<dbReference type="CDD" id="cd10285">
    <property type="entry name" value="somatotropin_like"/>
    <property type="match status" value="1"/>
</dbReference>
<dbReference type="FunFam" id="1.20.1250.10:FF:000002">
    <property type="entry name" value="Growth hormone"/>
    <property type="match status" value="1"/>
</dbReference>
<dbReference type="Gene3D" id="1.20.1250.10">
    <property type="match status" value="1"/>
</dbReference>
<dbReference type="InterPro" id="IPR009079">
    <property type="entry name" value="4_helix_cytokine-like_core"/>
</dbReference>
<dbReference type="InterPro" id="IPR034975">
    <property type="entry name" value="Somatotropin"/>
</dbReference>
<dbReference type="InterPro" id="IPR001400">
    <property type="entry name" value="Somatotropin/Prolactin"/>
</dbReference>
<dbReference type="InterPro" id="IPR018116">
    <property type="entry name" value="Somatotropin_CS"/>
</dbReference>
<dbReference type="PANTHER" id="PTHR11417:SF2">
    <property type="entry name" value="SOMATOTROPIN"/>
    <property type="match status" value="1"/>
</dbReference>
<dbReference type="PANTHER" id="PTHR11417">
    <property type="entry name" value="SOMATOTROPIN,PROLACTIN"/>
    <property type="match status" value="1"/>
</dbReference>
<dbReference type="Pfam" id="PF00103">
    <property type="entry name" value="Hormone_1"/>
    <property type="match status" value="1"/>
</dbReference>
<dbReference type="PRINTS" id="PR00836">
    <property type="entry name" value="SOMATOTROPIN"/>
</dbReference>
<dbReference type="SUPFAM" id="SSF47266">
    <property type="entry name" value="4-helical cytokines"/>
    <property type="match status" value="1"/>
</dbReference>
<dbReference type="PROSITE" id="PS00266">
    <property type="entry name" value="SOMATOTROPIN_1"/>
    <property type="match status" value="1"/>
</dbReference>
<dbReference type="PROSITE" id="PS00338">
    <property type="entry name" value="SOMATOTROPIN_2"/>
    <property type="match status" value="1"/>
</dbReference>
<accession>P10766</accession>
<reference key="1">
    <citation type="journal article" date="1989" name="Int. J. Pept. Protein Res.">
        <title>Primary structure of fox pituitary growth hormone.</title>
        <authorList>
            <person name="Li C.H."/>
            <person name="Izdebski J."/>
            <person name="Chung D."/>
        </authorList>
    </citation>
    <scope>PROTEIN SEQUENCE</scope>
    <source>
        <tissue>Pituitary</tissue>
    </source>
</reference>
<keyword id="KW-0903">Direct protein sequencing</keyword>
<keyword id="KW-1015">Disulfide bond</keyword>
<keyword id="KW-0372">Hormone</keyword>
<keyword id="KW-0479">Metal-binding</keyword>
<keyword id="KW-0597">Phosphoprotein</keyword>
<keyword id="KW-1185">Reference proteome</keyword>
<keyword id="KW-0964">Secreted</keyword>
<keyword id="KW-0862">Zinc</keyword>
<protein>
    <recommendedName>
        <fullName>Somatotropin</fullName>
    </recommendedName>
    <alternativeName>
        <fullName>Growth hormone</fullName>
    </alternativeName>
</protein>
<proteinExistence type="evidence at protein level"/>
<gene>
    <name type="primary">GH1</name>
</gene>
<evidence type="ECO:0000250" key="1"/>
<evidence type="ECO:0000250" key="2">
    <source>
        <dbReference type="UniProtKB" id="P01241"/>
    </source>
</evidence>
<evidence type="ECO:0000305" key="3"/>